<name>HPRT_METRM</name>
<protein>
    <recommendedName>
        <fullName evidence="1">Hypoxanthine/guanine phosphoribosyltransferase</fullName>
        <shortName evidence="1">HGPRTase</shortName>
        <ecNumber evidence="1">2.4.2.8</ecNumber>
    </recommendedName>
</protein>
<organism>
    <name type="scientific">Methanobrevibacter ruminantium (strain ATCC 35063 / DSM 1093 / JCM 13430 / OCM 146 / M1)</name>
    <name type="common">Methanobacterium ruminantium</name>
    <dbReference type="NCBI Taxonomy" id="634498"/>
    <lineage>
        <taxon>Archaea</taxon>
        <taxon>Methanobacteriati</taxon>
        <taxon>Methanobacteriota</taxon>
        <taxon>Methanomada group</taxon>
        <taxon>Methanobacteria</taxon>
        <taxon>Methanobacteriales</taxon>
        <taxon>Methanobacteriaceae</taxon>
        <taxon>Methanobrevibacter</taxon>
    </lineage>
</organism>
<accession>D3DYU7</accession>
<proteinExistence type="inferred from homology"/>
<sequence>MLENLVESLRNAPVVKKGDYDYFVHGISDGIPALNPCVLKEISEVLAERIDLDKVDKIVGVEAMGIHIATALSLETGLPLLVIRKREYGLEGEHEILKHTGYATSKLYINDLNEGDNIVLVDDVVSTGGTLSVVINELKAIGVNILDTFVVVEKGEGKKIVEDKTGENIVTLVKLDVVDGKVVADSLI</sequence>
<keyword id="KW-0963">Cytoplasm</keyword>
<keyword id="KW-0328">Glycosyltransferase</keyword>
<keyword id="KW-0660">Purine salvage</keyword>
<keyword id="KW-0808">Transferase</keyword>
<evidence type="ECO:0000255" key="1">
    <source>
        <dbReference type="HAMAP-Rule" id="MF_01467"/>
    </source>
</evidence>
<dbReference type="EC" id="2.4.2.8" evidence="1"/>
<dbReference type="EMBL" id="CP001719">
    <property type="protein sequence ID" value="ADC46017.1"/>
    <property type="molecule type" value="Genomic_DNA"/>
</dbReference>
<dbReference type="RefSeq" id="WP_012954973.1">
    <property type="nucleotide sequence ID" value="NC_013790.1"/>
</dbReference>
<dbReference type="SMR" id="D3DYU7"/>
<dbReference type="STRING" id="634498.mru_0165"/>
<dbReference type="GeneID" id="8769784"/>
<dbReference type="KEGG" id="mru:mru_0165"/>
<dbReference type="PATRIC" id="fig|634498.28.peg.170"/>
<dbReference type="eggNOG" id="arCOG00030">
    <property type="taxonomic scope" value="Archaea"/>
</dbReference>
<dbReference type="HOGENOM" id="CLU_126376_0_0_2"/>
<dbReference type="OrthoDB" id="8323at2157"/>
<dbReference type="UniPathway" id="UPA00591">
    <property type="reaction ID" value="UER00648"/>
</dbReference>
<dbReference type="Proteomes" id="UP000008680">
    <property type="component" value="Chromosome"/>
</dbReference>
<dbReference type="GO" id="GO:0005737">
    <property type="term" value="C:cytoplasm"/>
    <property type="evidence" value="ECO:0007669"/>
    <property type="project" value="UniProtKB-SubCell"/>
</dbReference>
<dbReference type="GO" id="GO:0052657">
    <property type="term" value="F:guanine phosphoribosyltransferase activity"/>
    <property type="evidence" value="ECO:0007669"/>
    <property type="project" value="RHEA"/>
</dbReference>
<dbReference type="GO" id="GO:0004422">
    <property type="term" value="F:hypoxanthine phosphoribosyltransferase activity"/>
    <property type="evidence" value="ECO:0007669"/>
    <property type="project" value="UniProtKB-UniRule"/>
</dbReference>
<dbReference type="GO" id="GO:0032264">
    <property type="term" value="P:IMP salvage"/>
    <property type="evidence" value="ECO:0007669"/>
    <property type="project" value="UniProtKB-UniRule"/>
</dbReference>
<dbReference type="GO" id="GO:0006166">
    <property type="term" value="P:purine ribonucleoside salvage"/>
    <property type="evidence" value="ECO:0007669"/>
    <property type="project" value="UniProtKB-KW"/>
</dbReference>
<dbReference type="CDD" id="cd06223">
    <property type="entry name" value="PRTases_typeI"/>
    <property type="match status" value="1"/>
</dbReference>
<dbReference type="Gene3D" id="3.40.50.2020">
    <property type="match status" value="1"/>
</dbReference>
<dbReference type="HAMAP" id="MF_01467">
    <property type="entry name" value="Hypx_phosphoribosyltr"/>
    <property type="match status" value="1"/>
</dbReference>
<dbReference type="InterPro" id="IPR026597">
    <property type="entry name" value="HGPRTase-like"/>
</dbReference>
<dbReference type="InterPro" id="IPR000836">
    <property type="entry name" value="PRibTrfase_dom"/>
</dbReference>
<dbReference type="InterPro" id="IPR029057">
    <property type="entry name" value="PRTase-like"/>
</dbReference>
<dbReference type="InterPro" id="IPR050118">
    <property type="entry name" value="Pur/Pyrimidine_PRTase"/>
</dbReference>
<dbReference type="NCBIfam" id="NF040646">
    <property type="entry name" value="HPT_Archaea"/>
    <property type="match status" value="1"/>
</dbReference>
<dbReference type="NCBIfam" id="NF002635">
    <property type="entry name" value="PRK02304.1-4"/>
    <property type="match status" value="1"/>
</dbReference>
<dbReference type="PANTHER" id="PTHR43864">
    <property type="entry name" value="HYPOXANTHINE/GUANINE PHOSPHORIBOSYLTRANSFERASE"/>
    <property type="match status" value="1"/>
</dbReference>
<dbReference type="PANTHER" id="PTHR43864:SF1">
    <property type="entry name" value="XANTHINE PHOSPHORIBOSYLTRANSFERASE"/>
    <property type="match status" value="1"/>
</dbReference>
<dbReference type="Pfam" id="PF00156">
    <property type="entry name" value="Pribosyltran"/>
    <property type="match status" value="1"/>
</dbReference>
<dbReference type="SUPFAM" id="SSF53271">
    <property type="entry name" value="PRTase-like"/>
    <property type="match status" value="1"/>
</dbReference>
<dbReference type="PROSITE" id="PS00103">
    <property type="entry name" value="PUR_PYR_PR_TRANSFER"/>
    <property type="match status" value="1"/>
</dbReference>
<gene>
    <name evidence="1" type="primary">hpt</name>
    <name type="ordered locus">mru_0165</name>
</gene>
<comment type="function">
    <text evidence="1">Catalyzes a salvage reaction resulting in the formation of IMP that is energically less costly than de novo synthesis.</text>
</comment>
<comment type="catalytic activity">
    <reaction evidence="1">
        <text>IMP + diphosphate = hypoxanthine + 5-phospho-alpha-D-ribose 1-diphosphate</text>
        <dbReference type="Rhea" id="RHEA:17973"/>
        <dbReference type="ChEBI" id="CHEBI:17368"/>
        <dbReference type="ChEBI" id="CHEBI:33019"/>
        <dbReference type="ChEBI" id="CHEBI:58017"/>
        <dbReference type="ChEBI" id="CHEBI:58053"/>
        <dbReference type="EC" id="2.4.2.8"/>
    </reaction>
</comment>
<comment type="catalytic activity">
    <reaction evidence="1">
        <text>GMP + diphosphate = guanine + 5-phospho-alpha-D-ribose 1-diphosphate</text>
        <dbReference type="Rhea" id="RHEA:25424"/>
        <dbReference type="ChEBI" id="CHEBI:16235"/>
        <dbReference type="ChEBI" id="CHEBI:33019"/>
        <dbReference type="ChEBI" id="CHEBI:58017"/>
        <dbReference type="ChEBI" id="CHEBI:58115"/>
        <dbReference type="EC" id="2.4.2.8"/>
    </reaction>
</comment>
<comment type="pathway">
    <text evidence="1">Purine metabolism; IMP biosynthesis via salvage pathway; IMP from hypoxanthine: step 1/1.</text>
</comment>
<comment type="subunit">
    <text evidence="1">Homodimer.</text>
</comment>
<comment type="subcellular location">
    <subcellularLocation>
        <location evidence="1">Cytoplasm</location>
    </subcellularLocation>
</comment>
<comment type="similarity">
    <text evidence="1">Belongs to the purine/pyrimidine phosphoribosyltransferase family. Archaeal HPRT subfamily.</text>
</comment>
<feature type="chain" id="PRO_0000415465" description="Hypoxanthine/guanine phosphoribosyltransferase">
    <location>
        <begin position="1"/>
        <end position="188"/>
    </location>
</feature>
<reference key="1">
    <citation type="journal article" date="2010" name="PLoS ONE">
        <title>The genome sequence of the rumen methanogen Methanobrevibacter ruminantium reveals new possibilities for controlling ruminant methane emissions.</title>
        <authorList>
            <person name="Leahy S.C."/>
            <person name="Kelly W.J."/>
            <person name="Altermann E."/>
            <person name="Ronimus R.S."/>
            <person name="Yeoman C.J."/>
            <person name="Pacheco D.M."/>
            <person name="Li D."/>
            <person name="Kong Z."/>
            <person name="McTavish S."/>
            <person name="Sang C."/>
            <person name="Lambie S.C."/>
            <person name="Janssen P.H."/>
            <person name="Dey D."/>
            <person name="Attwood G.T."/>
        </authorList>
    </citation>
    <scope>NUCLEOTIDE SEQUENCE [LARGE SCALE GENOMIC DNA]</scope>
    <source>
        <strain>ATCC 35063 / DSM 1093 / JCM 13430 / OCM 146 / M1</strain>
    </source>
</reference>